<gene>
    <name type="primary">CTNNBIP1</name>
</gene>
<accession>Q5E9N2</accession>
<keyword id="KW-0963">Cytoplasm</keyword>
<keyword id="KW-0539">Nucleus</keyword>
<keyword id="KW-0597">Phosphoprotein</keyword>
<keyword id="KW-1185">Reference proteome</keyword>
<keyword id="KW-0879">Wnt signaling pathway</keyword>
<sequence>MNREGAPGKSPEEMYIQQKVRVLLMLRKMGSNLTANEEEFLRTYAGVVNSQLSQLPQHSIDQGAEDVVMAFSRSETEDRRQ</sequence>
<evidence type="ECO:0000250" key="1"/>
<evidence type="ECO:0000250" key="2">
    <source>
        <dbReference type="UniProtKB" id="Q9JJN6"/>
    </source>
</evidence>
<evidence type="ECO:0000305" key="3"/>
<dbReference type="EMBL" id="BT020888">
    <property type="protein sequence ID" value="AAX08905.1"/>
    <property type="molecule type" value="mRNA"/>
</dbReference>
<dbReference type="RefSeq" id="NP_001032219.1">
    <property type="nucleotide sequence ID" value="NM_001037142.1"/>
</dbReference>
<dbReference type="RefSeq" id="XP_005217039.1">
    <property type="nucleotide sequence ID" value="XM_005216982.2"/>
</dbReference>
<dbReference type="RefSeq" id="XP_010811577.1">
    <property type="nucleotide sequence ID" value="XM_010813275.2"/>
</dbReference>
<dbReference type="RefSeq" id="XP_024832230.1">
    <property type="nucleotide sequence ID" value="XM_024976462.2"/>
</dbReference>
<dbReference type="SMR" id="Q5E9N2"/>
<dbReference type="FunCoup" id="Q5E9N2">
    <property type="interactions" value="446"/>
</dbReference>
<dbReference type="STRING" id="9913.ENSBTAP00000068342"/>
<dbReference type="PaxDb" id="9913-ENSBTAP00000007790"/>
<dbReference type="GeneID" id="614630"/>
<dbReference type="KEGG" id="bta:614630"/>
<dbReference type="CTD" id="56998"/>
<dbReference type="VEuPathDB" id="HostDB:ENSBTAG00000005933"/>
<dbReference type="eggNOG" id="ENOG502S3XR">
    <property type="taxonomic scope" value="Eukaryota"/>
</dbReference>
<dbReference type="HOGENOM" id="CLU_145119_1_0_1"/>
<dbReference type="InParanoid" id="Q5E9N2"/>
<dbReference type="OMA" id="MNCEGAS"/>
<dbReference type="OrthoDB" id="9926449at2759"/>
<dbReference type="Reactome" id="R-BTA-3769402">
    <property type="pathway name" value="Deactivation of the beta-catenin transactivating complex"/>
</dbReference>
<dbReference type="Proteomes" id="UP000009136">
    <property type="component" value="Chromosome 16"/>
</dbReference>
<dbReference type="Bgee" id="ENSBTAG00000005933">
    <property type="expression patterns" value="Expressed in surface of tongue and 103 other cell types or tissues"/>
</dbReference>
<dbReference type="GO" id="GO:0030877">
    <property type="term" value="C:beta-catenin destruction complex"/>
    <property type="evidence" value="ECO:0000318"/>
    <property type="project" value="GO_Central"/>
</dbReference>
<dbReference type="GO" id="GO:1990711">
    <property type="term" value="C:beta-catenin-ICAT complex"/>
    <property type="evidence" value="ECO:0007669"/>
    <property type="project" value="Ensembl"/>
</dbReference>
<dbReference type="GO" id="GO:0005829">
    <property type="term" value="C:cytosol"/>
    <property type="evidence" value="ECO:0000318"/>
    <property type="project" value="GO_Central"/>
</dbReference>
<dbReference type="GO" id="GO:0005634">
    <property type="term" value="C:nucleus"/>
    <property type="evidence" value="ECO:0000318"/>
    <property type="project" value="GO_Central"/>
</dbReference>
<dbReference type="GO" id="GO:0070016">
    <property type="term" value="F:armadillo repeat domain binding"/>
    <property type="evidence" value="ECO:0007669"/>
    <property type="project" value="Ensembl"/>
</dbReference>
<dbReference type="GO" id="GO:0008013">
    <property type="term" value="F:beta-catenin binding"/>
    <property type="evidence" value="ECO:0000318"/>
    <property type="project" value="GO_Central"/>
</dbReference>
<dbReference type="GO" id="GO:0001223">
    <property type="term" value="F:transcription coactivator binding"/>
    <property type="evidence" value="ECO:0007669"/>
    <property type="project" value="Ensembl"/>
</dbReference>
<dbReference type="GO" id="GO:0140416">
    <property type="term" value="F:transcription regulator inhibitor activity"/>
    <property type="evidence" value="ECO:0007669"/>
    <property type="project" value="Ensembl"/>
</dbReference>
<dbReference type="GO" id="GO:0009952">
    <property type="term" value="P:anterior/posterior pattern specification"/>
    <property type="evidence" value="ECO:0007669"/>
    <property type="project" value="Ensembl"/>
</dbReference>
<dbReference type="GO" id="GO:0001658">
    <property type="term" value="P:branching involved in ureteric bud morphogenesis"/>
    <property type="evidence" value="ECO:0007669"/>
    <property type="project" value="Ensembl"/>
</dbReference>
<dbReference type="GO" id="GO:0090090">
    <property type="term" value="P:negative regulation of canonical Wnt signaling pathway"/>
    <property type="evidence" value="ECO:0007669"/>
    <property type="project" value="Ensembl"/>
</dbReference>
<dbReference type="GO" id="GO:0072201">
    <property type="term" value="P:negative regulation of mesenchymal cell proliferation"/>
    <property type="evidence" value="ECO:0007669"/>
    <property type="project" value="Ensembl"/>
</dbReference>
<dbReference type="GO" id="GO:0031333">
    <property type="term" value="P:negative regulation of protein-containing complex assembly"/>
    <property type="evidence" value="ECO:0007669"/>
    <property type="project" value="Ensembl"/>
</dbReference>
<dbReference type="GO" id="GO:0048662">
    <property type="term" value="P:negative regulation of smooth muscle cell proliferation"/>
    <property type="evidence" value="ECO:0007669"/>
    <property type="project" value="Ensembl"/>
</dbReference>
<dbReference type="GO" id="GO:0060633">
    <property type="term" value="P:negative regulation of transcription initiation by RNA polymerase II"/>
    <property type="evidence" value="ECO:0007669"/>
    <property type="project" value="Ensembl"/>
</dbReference>
<dbReference type="GO" id="GO:0030178">
    <property type="term" value="P:negative regulation of Wnt signaling pathway"/>
    <property type="evidence" value="ECO:0000318"/>
    <property type="project" value="GO_Central"/>
</dbReference>
<dbReference type="GO" id="GO:0045657">
    <property type="term" value="P:positive regulation of monocyte differentiation"/>
    <property type="evidence" value="ECO:0007669"/>
    <property type="project" value="Ensembl"/>
</dbReference>
<dbReference type="GO" id="GO:0045669">
    <property type="term" value="P:positive regulation of osteoblast differentiation"/>
    <property type="evidence" value="ECO:0007669"/>
    <property type="project" value="Ensembl"/>
</dbReference>
<dbReference type="GO" id="GO:0002528">
    <property type="term" value="P:regulation of vascular permeability involved in acute inflammatory response"/>
    <property type="evidence" value="ECO:0007669"/>
    <property type="project" value="Ensembl"/>
</dbReference>
<dbReference type="GO" id="GO:0016055">
    <property type="term" value="P:Wnt signaling pathway"/>
    <property type="evidence" value="ECO:0007669"/>
    <property type="project" value="UniProtKB-KW"/>
</dbReference>
<dbReference type="FunFam" id="1.10.10.490:FF:000001">
    <property type="entry name" value="beta-catenin-interacting protein 1"/>
    <property type="match status" value="1"/>
</dbReference>
<dbReference type="Gene3D" id="1.10.10.490">
    <property type="entry name" value="Beta-catenin-interacting ICAT"/>
    <property type="match status" value="1"/>
</dbReference>
<dbReference type="InterPro" id="IPR009428">
    <property type="entry name" value="ICAT_dom"/>
</dbReference>
<dbReference type="InterPro" id="IPR036911">
    <property type="entry name" value="ICAT_sf"/>
</dbReference>
<dbReference type="PANTHER" id="PTHR47142">
    <property type="entry name" value="BETA-CATENIN-INTERACTING PROTEIN 1"/>
    <property type="match status" value="1"/>
</dbReference>
<dbReference type="PANTHER" id="PTHR47142:SF1">
    <property type="entry name" value="BETA-CATENIN-INTERACTING PROTEIN 1"/>
    <property type="match status" value="1"/>
</dbReference>
<dbReference type="Pfam" id="PF06384">
    <property type="entry name" value="ICAT"/>
    <property type="match status" value="1"/>
</dbReference>
<dbReference type="SUPFAM" id="SSF81730">
    <property type="entry name" value="beta-catenin-interacting protein ICAT"/>
    <property type="match status" value="1"/>
</dbReference>
<reference key="1">
    <citation type="journal article" date="2005" name="BMC Genomics">
        <title>Characterization of 954 bovine full-CDS cDNA sequences.</title>
        <authorList>
            <person name="Harhay G.P."/>
            <person name="Sonstegard T.S."/>
            <person name="Keele J.W."/>
            <person name="Heaton M.P."/>
            <person name="Clawson M.L."/>
            <person name="Snelling W.M."/>
            <person name="Wiedmann R.T."/>
            <person name="Van Tassell C.P."/>
            <person name="Smith T.P.L."/>
        </authorList>
    </citation>
    <scope>NUCLEOTIDE SEQUENCE [LARGE SCALE MRNA]</scope>
</reference>
<comment type="function">
    <text evidence="1">Prevents the interaction between CTNNB1 and TCF family members, and acts as a negative regulator of the Wnt signaling pathway.</text>
</comment>
<comment type="subunit">
    <text evidence="1">Binds CTNNB1.</text>
</comment>
<comment type="subcellular location">
    <subcellularLocation>
        <location evidence="1">Cytoplasm</location>
    </subcellularLocation>
    <subcellularLocation>
        <location evidence="1">Nucleus</location>
    </subcellularLocation>
</comment>
<comment type="similarity">
    <text evidence="3">Belongs to the CTNNBIP1 family.</text>
</comment>
<protein>
    <recommendedName>
        <fullName>Beta-catenin-interacting protein 1</fullName>
    </recommendedName>
</protein>
<name>CNBP1_BOVIN</name>
<proteinExistence type="inferred from homology"/>
<feature type="chain" id="PRO_0000263697" description="Beta-catenin-interacting protein 1">
    <location>
        <begin position="1"/>
        <end position="81"/>
    </location>
</feature>
<feature type="modified residue" description="Phosphoserine" evidence="2">
    <location>
        <position position="59"/>
    </location>
</feature>
<organism>
    <name type="scientific">Bos taurus</name>
    <name type="common">Bovine</name>
    <dbReference type="NCBI Taxonomy" id="9913"/>
    <lineage>
        <taxon>Eukaryota</taxon>
        <taxon>Metazoa</taxon>
        <taxon>Chordata</taxon>
        <taxon>Craniata</taxon>
        <taxon>Vertebrata</taxon>
        <taxon>Euteleostomi</taxon>
        <taxon>Mammalia</taxon>
        <taxon>Eutheria</taxon>
        <taxon>Laurasiatheria</taxon>
        <taxon>Artiodactyla</taxon>
        <taxon>Ruminantia</taxon>
        <taxon>Pecora</taxon>
        <taxon>Bovidae</taxon>
        <taxon>Bovinae</taxon>
        <taxon>Bos</taxon>
    </lineage>
</organism>